<evidence type="ECO:0000255" key="1"/>
<evidence type="ECO:0000255" key="2">
    <source>
        <dbReference type="PROSITE-ProRule" id="PRU00042"/>
    </source>
</evidence>
<evidence type="ECO:0000256" key="3">
    <source>
        <dbReference type="SAM" id="MobiDB-lite"/>
    </source>
</evidence>
<evidence type="ECO:0000269" key="4">
    <source>
    </source>
</evidence>
<evidence type="ECO:0000305" key="5"/>
<name>RGM1_YEAST</name>
<accession>Q00453</accession>
<accession>D6W005</accession>
<gene>
    <name type="primary">RGM1</name>
    <name type="ordered locus">YMR182C</name>
    <name type="ORF">YM8010.12C</name>
</gene>
<comment type="interaction">
    <interactant intactId="EBI-15073">
        <id>Q00453</id>
    </interactant>
    <interactant intactId="EBI-16219">
        <id>P39940</id>
        <label>RSP5</label>
    </interactant>
    <organismsDiffer>false</organismsDiffer>
    <experiments>2</experiments>
</comment>
<comment type="subcellular location">
    <subcellularLocation>
        <location>Nucleus</location>
    </subcellularLocation>
</comment>
<comment type="induction">
    <text>Under the control of the inducible GAL10 promoter.</text>
</comment>
<comment type="domain">
    <text>The Pro-rich region of rgm1 attached to a heterologous DNA binding domain is able to repress the expression of the target gene.</text>
</comment>
<comment type="miscellaneous">
    <text evidence="4">Present with 1230 molecules/cell in log phase SD medium.</text>
</comment>
<proteinExistence type="evidence at protein level"/>
<protein>
    <recommendedName>
        <fullName>Probable transcription repressor protein RGM1</fullName>
    </recommendedName>
</protein>
<dbReference type="EMBL" id="X59861">
    <property type="protein sequence ID" value="CAA42521.1"/>
    <property type="molecule type" value="Genomic_DNA"/>
</dbReference>
<dbReference type="EMBL" id="Z49808">
    <property type="protein sequence ID" value="CAA89915.1"/>
    <property type="molecule type" value="Genomic_DNA"/>
</dbReference>
<dbReference type="EMBL" id="BK006946">
    <property type="protein sequence ID" value="DAA10079.1"/>
    <property type="molecule type" value="Genomic_DNA"/>
</dbReference>
<dbReference type="PIR" id="S55129">
    <property type="entry name" value="S55129"/>
</dbReference>
<dbReference type="RefSeq" id="NP_013907.1">
    <property type="nucleotide sequence ID" value="NM_001182688.1"/>
</dbReference>
<dbReference type="BioGRID" id="35360">
    <property type="interactions" value="60"/>
</dbReference>
<dbReference type="DIP" id="DIP-4422N"/>
<dbReference type="FunCoup" id="Q00453">
    <property type="interactions" value="628"/>
</dbReference>
<dbReference type="IntAct" id="Q00453">
    <property type="interactions" value="3"/>
</dbReference>
<dbReference type="STRING" id="4932.YMR182C"/>
<dbReference type="PaxDb" id="4932-YMR182C"/>
<dbReference type="PeptideAtlas" id="Q00453"/>
<dbReference type="EnsemblFungi" id="YMR182C_mRNA">
    <property type="protein sequence ID" value="YMR182C"/>
    <property type="gene ID" value="YMR182C"/>
</dbReference>
<dbReference type="GeneID" id="855220"/>
<dbReference type="KEGG" id="sce:YMR182C"/>
<dbReference type="AGR" id="SGD:S000004794"/>
<dbReference type="SGD" id="S000004794">
    <property type="gene designation" value="RGM1"/>
</dbReference>
<dbReference type="VEuPathDB" id="FungiDB:YMR182C"/>
<dbReference type="eggNOG" id="KOG1721">
    <property type="taxonomic scope" value="Eukaryota"/>
</dbReference>
<dbReference type="GeneTree" id="ENSGT00940000176682"/>
<dbReference type="HOGENOM" id="CLU_1305731_0_0_1"/>
<dbReference type="InParanoid" id="Q00453"/>
<dbReference type="OMA" id="PNATRMF"/>
<dbReference type="OrthoDB" id="10018191at2759"/>
<dbReference type="BioCyc" id="YEAST:G3O-32870-MONOMER"/>
<dbReference type="BioGRID-ORCS" id="855220">
    <property type="hits" value="0 hits in 13 CRISPR screens"/>
</dbReference>
<dbReference type="PRO" id="PR:Q00453"/>
<dbReference type="Proteomes" id="UP000002311">
    <property type="component" value="Chromosome XIII"/>
</dbReference>
<dbReference type="RNAct" id="Q00453">
    <property type="molecule type" value="protein"/>
</dbReference>
<dbReference type="GO" id="GO:0000785">
    <property type="term" value="C:chromatin"/>
    <property type="evidence" value="ECO:0000314"/>
    <property type="project" value="SGD"/>
</dbReference>
<dbReference type="GO" id="GO:0005829">
    <property type="term" value="C:cytosol"/>
    <property type="evidence" value="ECO:0000314"/>
    <property type="project" value="SGD"/>
</dbReference>
<dbReference type="GO" id="GO:0005634">
    <property type="term" value="C:nucleus"/>
    <property type="evidence" value="ECO:0000314"/>
    <property type="project" value="SGD"/>
</dbReference>
<dbReference type="GO" id="GO:0000981">
    <property type="term" value="F:DNA-binding transcription factor activity, RNA polymerase II-specific"/>
    <property type="evidence" value="ECO:0000250"/>
    <property type="project" value="SGD"/>
</dbReference>
<dbReference type="GO" id="GO:0000978">
    <property type="term" value="F:RNA polymerase II cis-regulatory region sequence-specific DNA binding"/>
    <property type="evidence" value="ECO:0007669"/>
    <property type="project" value="InterPro"/>
</dbReference>
<dbReference type="GO" id="GO:0008270">
    <property type="term" value="F:zinc ion binding"/>
    <property type="evidence" value="ECO:0007669"/>
    <property type="project" value="UniProtKB-KW"/>
</dbReference>
<dbReference type="GO" id="GO:0045944">
    <property type="term" value="P:positive regulation of transcription by RNA polymerase II"/>
    <property type="evidence" value="ECO:0000315"/>
    <property type="project" value="SGD"/>
</dbReference>
<dbReference type="FunFam" id="3.30.160.60:FF:002343">
    <property type="entry name" value="Zinc finger protein 33A"/>
    <property type="match status" value="1"/>
</dbReference>
<dbReference type="Gene3D" id="3.30.160.60">
    <property type="entry name" value="Classic Zinc Finger"/>
    <property type="match status" value="2"/>
</dbReference>
<dbReference type="InterPro" id="IPR051059">
    <property type="entry name" value="VerF-like"/>
</dbReference>
<dbReference type="InterPro" id="IPR036236">
    <property type="entry name" value="Znf_C2H2_sf"/>
</dbReference>
<dbReference type="InterPro" id="IPR013087">
    <property type="entry name" value="Znf_C2H2_type"/>
</dbReference>
<dbReference type="PANTHER" id="PTHR40626">
    <property type="entry name" value="MIP31509P"/>
    <property type="match status" value="1"/>
</dbReference>
<dbReference type="PANTHER" id="PTHR40626:SF32">
    <property type="entry name" value="ZINC FINGER PROTEIN RST2"/>
    <property type="match status" value="1"/>
</dbReference>
<dbReference type="Pfam" id="PF00096">
    <property type="entry name" value="zf-C2H2"/>
    <property type="match status" value="2"/>
</dbReference>
<dbReference type="SMART" id="SM00355">
    <property type="entry name" value="ZnF_C2H2"/>
    <property type="match status" value="2"/>
</dbReference>
<dbReference type="SUPFAM" id="SSF57667">
    <property type="entry name" value="beta-beta-alpha zinc fingers"/>
    <property type="match status" value="1"/>
</dbReference>
<dbReference type="PROSITE" id="PS00028">
    <property type="entry name" value="ZINC_FINGER_C2H2_1"/>
    <property type="match status" value="1"/>
</dbReference>
<dbReference type="PROSITE" id="PS50157">
    <property type="entry name" value="ZINC_FINGER_C2H2_2"/>
    <property type="match status" value="2"/>
</dbReference>
<feature type="chain" id="PRO_0000046817" description="Probable transcription repressor protein RGM1">
    <location>
        <begin position="1"/>
        <end position="211"/>
    </location>
</feature>
<feature type="zinc finger region" description="C2H2-type 1" evidence="2">
    <location>
        <begin position="19"/>
        <end position="44"/>
    </location>
</feature>
<feature type="zinc finger region" description="C2H2-type 2" evidence="2">
    <location>
        <begin position="50"/>
        <end position="73"/>
    </location>
</feature>
<feature type="region of interest" description="Disordered" evidence="3">
    <location>
        <begin position="178"/>
        <end position="211"/>
    </location>
</feature>
<feature type="short sequence motif" description="Nuclear localization signal" evidence="1">
    <location>
        <begin position="6"/>
        <end position="11"/>
    </location>
</feature>
<feature type="compositionally biased region" description="Low complexity" evidence="3">
    <location>
        <begin position="183"/>
        <end position="194"/>
    </location>
</feature>
<feature type="sequence conflict" description="In Ref. 1; CAA42521." evidence="5" ref="1">
    <original>A</original>
    <variation>V</variation>
    <location>
        <position position="114"/>
    </location>
</feature>
<organism>
    <name type="scientific">Saccharomyces cerevisiae (strain ATCC 204508 / S288c)</name>
    <name type="common">Baker's yeast</name>
    <dbReference type="NCBI Taxonomy" id="559292"/>
    <lineage>
        <taxon>Eukaryota</taxon>
        <taxon>Fungi</taxon>
        <taxon>Dikarya</taxon>
        <taxon>Ascomycota</taxon>
        <taxon>Saccharomycotina</taxon>
        <taxon>Saccharomycetes</taxon>
        <taxon>Saccharomycetales</taxon>
        <taxon>Saccharomycetaceae</taxon>
        <taxon>Saccharomyces</taxon>
    </lineage>
</organism>
<keyword id="KW-0238">DNA-binding</keyword>
<keyword id="KW-0479">Metal-binding</keyword>
<keyword id="KW-0539">Nucleus</keyword>
<keyword id="KW-1185">Reference proteome</keyword>
<keyword id="KW-0677">Repeat</keyword>
<keyword id="KW-0678">Repressor</keyword>
<keyword id="KW-0804">Transcription</keyword>
<keyword id="KW-0805">Transcription regulation</keyword>
<keyword id="KW-0862">Zinc</keyword>
<keyword id="KW-0863">Zinc-finger</keyword>
<reference key="1">
    <citation type="journal article" date="1991" name="Nucleic Acids Res.">
        <title>The yeast putative transcriptional repressor RGM1 is a proline-rich zinc finger protein.</title>
        <authorList>
            <person name="Estruch F."/>
        </authorList>
    </citation>
    <scope>NUCLEOTIDE SEQUENCE [GENOMIC DNA]</scope>
    <source>
        <strain>ATCC 204508 / S288c</strain>
    </source>
</reference>
<reference key="2">
    <citation type="journal article" date="1997" name="Nature">
        <title>The nucleotide sequence of Saccharomyces cerevisiae chromosome XIII.</title>
        <authorList>
            <person name="Bowman S."/>
            <person name="Churcher C.M."/>
            <person name="Badcock K."/>
            <person name="Brown D."/>
            <person name="Chillingworth T."/>
            <person name="Connor R."/>
            <person name="Dedman K."/>
            <person name="Devlin K."/>
            <person name="Gentles S."/>
            <person name="Hamlin N."/>
            <person name="Hunt S."/>
            <person name="Jagels K."/>
            <person name="Lye G."/>
            <person name="Moule S."/>
            <person name="Odell C."/>
            <person name="Pearson D."/>
            <person name="Rajandream M.A."/>
            <person name="Rice P."/>
            <person name="Skelton J."/>
            <person name="Walsh S.V."/>
            <person name="Whitehead S."/>
            <person name="Barrell B.G."/>
        </authorList>
    </citation>
    <scope>NUCLEOTIDE SEQUENCE [LARGE SCALE GENOMIC DNA]</scope>
    <source>
        <strain>ATCC 204508 / S288c</strain>
    </source>
</reference>
<reference key="3">
    <citation type="journal article" date="2014" name="G3 (Bethesda)">
        <title>The reference genome sequence of Saccharomyces cerevisiae: Then and now.</title>
        <authorList>
            <person name="Engel S.R."/>
            <person name="Dietrich F.S."/>
            <person name="Fisk D.G."/>
            <person name="Binkley G."/>
            <person name="Balakrishnan R."/>
            <person name="Costanzo M.C."/>
            <person name="Dwight S.S."/>
            <person name="Hitz B.C."/>
            <person name="Karra K."/>
            <person name="Nash R.S."/>
            <person name="Weng S."/>
            <person name="Wong E.D."/>
            <person name="Lloyd P."/>
            <person name="Skrzypek M.S."/>
            <person name="Miyasato S.R."/>
            <person name="Simison M."/>
            <person name="Cherry J.M."/>
        </authorList>
    </citation>
    <scope>GENOME REANNOTATION</scope>
    <source>
        <strain>ATCC 204508 / S288c</strain>
    </source>
</reference>
<reference key="4">
    <citation type="journal article" date="2003" name="Nature">
        <title>Global analysis of protein expression in yeast.</title>
        <authorList>
            <person name="Ghaemmaghami S."/>
            <person name="Huh W.-K."/>
            <person name="Bower K."/>
            <person name="Howson R.W."/>
            <person name="Belle A."/>
            <person name="Dephoure N."/>
            <person name="O'Shea E.K."/>
            <person name="Weissman J.S."/>
        </authorList>
    </citation>
    <scope>LEVEL OF PROTEIN EXPRESSION [LARGE SCALE ANALYSIS]</scope>
</reference>
<sequence length="211" mass="23855">MRGKQPKRNKDNASVKRNYRCVGYPDCNMSFNRTEHLARHIRKHTGEKPFQCNICLKFFSRIDNLRQHQSSVHSDVDLMSLRRLQQSANSTANDPNATRMFPQLRPYGIVVQPAPVPYNLPISTPASPQDTISLYAPPYFPHPMPSAPIPLPHQPPPLPIYSYMQPLFLNHTPIQNHNIVELPPDSSDTPASPSKVQSFDQAKDASPNAKK</sequence>